<accession>Q44977</accession>
<comment type="function">
    <text evidence="1">Major immunodominant protein in mammalian hosts. Required for initial stages of mammalian infection. Inhibits macrophage-mediated phagocytosis of the bacteria. Binds human plasminogen; this probably confers an extracellular protease activity on the bacteria that allows it to traverse tissue. Interaction with tick I.ricinus salivary protein Salp15 protects the bacteria from antibody-mediated killing in vitro and in vivo.</text>
</comment>
<comment type="subunit">
    <text evidence="1 3 6">Homodimer (Probable). Interacts with tick I.ricinus salivary protein Iric-1, Iric-2 and Iric-3 (PubMed:33401196). Binds human (host) plasminogen (By similarity).</text>
</comment>
<comment type="subcellular location">
    <subcellularLocation>
        <location evidence="5">Cell outer membrane</location>
        <topology evidence="2">Lipid-anchor</topology>
    </subcellularLocation>
    <subcellularLocation>
        <location evidence="1">Cell surface</location>
    </subcellularLocation>
</comment>
<comment type="miscellaneous">
    <text evidence="5">The causative agent of Lyme disease, the bacteria has an enzootic lifestyle. Larval ticks are infected with bacteria during feeding on infected hosts (mostly mammals) which retain the bacteria during subsequent developmental stages. It is transmitted to the next host when it is bitten by ticks. During tick feeding (which can last for several days), bacterial migrate from the tick midgut to the salivary gland where they are transmitted to the host.</text>
</comment>
<comment type="similarity">
    <text evidence="5">Belongs to the OspC lipoprotein family.</text>
</comment>
<feature type="signal peptide" evidence="2">
    <location>
        <begin position="1"/>
        <end position="18"/>
    </location>
</feature>
<feature type="chain" id="PRO_5007702823" description="Outer surface protein C" evidence="2">
    <location>
        <begin position="19"/>
        <end position="211"/>
    </location>
</feature>
<feature type="lipid moiety-binding region" description="N-palmitoyl cysteine" evidence="2">
    <location>
        <position position="19"/>
    </location>
</feature>
<feature type="lipid moiety-binding region" description="S-diacylglycerol cysteine" evidence="2">
    <location>
        <position position="19"/>
    </location>
</feature>
<feature type="helix" evidence="14">
    <location>
        <begin position="42"/>
        <end position="74"/>
    </location>
</feature>
<feature type="turn" evidence="14">
    <location>
        <begin position="75"/>
        <end position="77"/>
    </location>
</feature>
<feature type="strand" evidence="14">
    <location>
        <begin position="78"/>
        <end position="80"/>
    </location>
</feature>
<feature type="strand" evidence="14">
    <location>
        <begin position="84"/>
        <end position="88"/>
    </location>
</feature>
<feature type="helix" evidence="14">
    <location>
        <begin position="94"/>
        <end position="113"/>
    </location>
</feature>
<feature type="strand" evidence="13">
    <location>
        <begin position="117"/>
        <end position="119"/>
    </location>
</feature>
<feature type="helix" evidence="14">
    <location>
        <begin position="121"/>
        <end position="140"/>
    </location>
</feature>
<feature type="helix" evidence="14">
    <location>
        <begin position="142"/>
        <end position="145"/>
    </location>
</feature>
<feature type="helix" evidence="14">
    <location>
        <begin position="152"/>
        <end position="159"/>
    </location>
</feature>
<feature type="turn" evidence="13">
    <location>
        <begin position="168"/>
        <end position="170"/>
    </location>
</feature>
<feature type="helix" evidence="14">
    <location>
        <begin position="171"/>
        <end position="197"/>
    </location>
</feature>
<keyword id="KW-0002">3D-structure</keyword>
<keyword id="KW-0998">Cell outer membrane</keyword>
<keyword id="KW-0449">Lipoprotein</keyword>
<keyword id="KW-0472">Membrane</keyword>
<keyword id="KW-0564">Palmitate</keyword>
<keyword id="KW-0732">Signal</keyword>
<keyword id="KW-0843">Virulence</keyword>
<proteinExistence type="evidence at protein level"/>
<name>OSPC2_BORBG</name>
<organism>
    <name type="scientific">Borreliella burgdorferi</name>
    <name type="common">Lyme disease spirochete</name>
    <name type="synonym">Borrelia burgdorferi</name>
    <dbReference type="NCBI Taxonomy" id="139"/>
    <lineage>
        <taxon>Bacteria</taxon>
        <taxon>Pseudomonadati</taxon>
        <taxon>Spirochaetota</taxon>
        <taxon>Spirochaetia</taxon>
        <taxon>Spirochaetales</taxon>
        <taxon>Borreliaceae</taxon>
        <taxon>Borreliella</taxon>
    </lineage>
</organism>
<protein>
    <recommendedName>
        <fullName evidence="4">Outer surface protein C</fullName>
    </recommendedName>
</protein>
<sequence>MKKNTLSAILMTLFLFISCNNSGKDGNTSANSADESVKGPNLTEISKKITDSNAVLLAVKEVEALLSSIDELAKAIGKKIKNDGSLGDEANHNESLLAGAYTISTLITQKLSKLNGSEGLKEKIAAAKKCSEEFSTKLKDNHAQLGIQGVTDENAKKAILKANAAGKDKGVEELEKLSGSLESLSKAAKEMLANSVKELTSPVVAESPKKP</sequence>
<reference evidence="8" key="1">
    <citation type="journal article" date="1995" name="J. Clin. Microbiol.">
        <title>Molecular analysis of genes encoding outer surface protein C (OspC) of Borrelia burgdorferi sensu lato: relationship to ospA genotype and evidence of lateral gene exchange of ospC.</title>
        <authorList>
            <person name="Jauris-Heipke S."/>
            <person name="Liegl G."/>
            <person name="Preac-Mursic V."/>
            <person name="Roessler D."/>
            <person name="Schwab E."/>
            <person name="Soutschek E."/>
            <person name="Will G."/>
            <person name="Wilske B."/>
        </authorList>
    </citation>
    <scope>NUCLEOTIDE SEQUENCE [GENOMIC DNA]</scope>
    <source>
        <strain>PBre</strain>
    </source>
</reference>
<reference evidence="9" key="2">
    <citation type="journal article" date="2006" name="Int. J. Med. Microbiol.">
        <title>Molecular analysis of decorin-binding protein A (DbpA) reveals five major groups among European Borrelia burgdorferi sensu lato strains with impact for the development of serological assays and indicates lateral gene transfer of the dbpA gene.</title>
        <authorList>
            <person name="Schulte-Spechtel U.C."/>
            <person name="Fingerle V."/>
            <person name="Goettner G."/>
            <person name="Rogge S."/>
            <person name="Wilske B."/>
        </authorList>
    </citation>
    <scope>NUCLEOTIDE SEQUENCE [GENOMIC DNA]</scope>
    <source>
        <strain evidence="9">PBre</strain>
        <strain evidence="10">PMi</strain>
        <strain evidence="11">PSpm</strain>
    </source>
</reference>
<reference evidence="7" key="3">
    <citation type="journal article" date="2008" name="Emerg. Infect. Dis.">
        <title>Wide distribution of a high-virulence Borrelia burgdorferi clone in Europe and North America.</title>
        <authorList>
            <person name="Qiu W.G."/>
            <person name="Bruno J.F."/>
            <person name="McCaig W.D."/>
            <person name="Xu Y."/>
            <person name="Livey I."/>
            <person name="Schriefer M.E."/>
            <person name="Luft B.J."/>
        </authorList>
    </citation>
    <scope>NUCLEOTIDE SEQUENCE [GENOMIC DNA]</scope>
    <source>
        <strain evidence="7">Bol12</strain>
    </source>
</reference>
<reference key="4">
    <citation type="journal article" date="2021" name="Ticks Tick Borne Dis.">
        <title>Strong interactions between Salp15 homologues from the tick I. ricinus and distinct types of the outer surface OspC protein from Borrelia.</title>
        <authorList>
            <person name="Bierwagen P."/>
            <person name="Sliwiak J."/>
            <person name="Jaskolski M."/>
            <person name="Urbanowicz A."/>
        </authorList>
    </citation>
    <scope>INTERACTION WITH IXODES SALIVARY PROTEIN 15</scope>
    <source>
        <strain>PBre</strain>
    </source>
</reference>
<reference evidence="12" key="5">
    <citation type="submission" date="2021-01" db="PDB data bank">
        <title>Structural studies of outer surface proteins (OspC) from different Borrelia strains.</title>
        <authorList>
            <person name="Sliwiak J."/>
            <person name="Bierwagen P."/>
            <person name="Ruszkowski M."/>
            <person name="Jaskolski M."/>
            <person name="Urbanowicz A."/>
        </authorList>
    </citation>
    <scope>X-RAY CRYSTALLOGRAPHY (1.85 ANGSTROMS) OF 38-211</scope>
</reference>
<dbReference type="EMBL" id="EF537412">
    <property type="protein sequence ID" value="ABQ42966.1"/>
    <property type="molecule type" value="Genomic_DNA"/>
</dbReference>
<dbReference type="EMBL" id="X81522">
    <property type="protein sequence ID" value="CAA57242.1"/>
    <property type="molecule type" value="Genomic_DNA"/>
</dbReference>
<dbReference type="EMBL" id="AJ749599">
    <property type="protein sequence ID" value="CAG44434.1"/>
    <property type="molecule type" value="Genomic_DNA"/>
</dbReference>
<dbReference type="EMBL" id="AJ749602">
    <property type="protein sequence ID" value="CAG44437.1"/>
    <property type="molecule type" value="Genomic_DNA"/>
</dbReference>
<dbReference type="EMBL" id="AJ749605">
    <property type="protein sequence ID" value="CAG44440.1"/>
    <property type="molecule type" value="Genomic_DNA"/>
</dbReference>
<dbReference type="PIR" id="S69918">
    <property type="entry name" value="S69918"/>
</dbReference>
<dbReference type="PDB" id="7BML">
    <property type="method" value="X-ray"/>
    <property type="resolution" value="1.85 A"/>
    <property type="chains" value="A/B/C/D=41-201"/>
</dbReference>
<dbReference type="PDB" id="7UJ2">
    <property type="method" value="X-ray"/>
    <property type="resolution" value="1.50 A"/>
    <property type="chains" value="A/B=38-202"/>
</dbReference>
<dbReference type="PDBsum" id="7BML"/>
<dbReference type="PDBsum" id="7UJ2"/>
<dbReference type="SMR" id="Q44977"/>
<dbReference type="GO" id="GO:0009279">
    <property type="term" value="C:cell outer membrane"/>
    <property type="evidence" value="ECO:0007669"/>
    <property type="project" value="UniProtKB-SubCell"/>
</dbReference>
<dbReference type="GO" id="GO:0009986">
    <property type="term" value="C:cell surface"/>
    <property type="evidence" value="ECO:0007669"/>
    <property type="project" value="UniProtKB-SubCell"/>
</dbReference>
<dbReference type="Gene3D" id="1.20.120.240">
    <property type="entry name" value="Lipoprotein, type 6"/>
    <property type="match status" value="1"/>
</dbReference>
<dbReference type="InterPro" id="IPR001800">
    <property type="entry name" value="Lipoprotein_OspC"/>
</dbReference>
<dbReference type="InterPro" id="IPR036437">
    <property type="entry name" value="OspC-like_sf"/>
</dbReference>
<dbReference type="Pfam" id="PF01441">
    <property type="entry name" value="Lipoprotein_6"/>
    <property type="match status" value="1"/>
</dbReference>
<dbReference type="SUPFAM" id="SSF63515">
    <property type="entry name" value="Outer surface protein C (OspC)"/>
    <property type="match status" value="1"/>
</dbReference>
<dbReference type="PROSITE" id="PS51257">
    <property type="entry name" value="PROKAR_LIPOPROTEIN"/>
    <property type="match status" value="1"/>
</dbReference>
<evidence type="ECO:0000250" key="1">
    <source>
        <dbReference type="UniProtKB" id="Q07337"/>
    </source>
</evidence>
<evidence type="ECO:0000255" key="2">
    <source>
        <dbReference type="PROSITE-ProRule" id="PRU00303"/>
    </source>
</evidence>
<evidence type="ECO:0000269" key="3">
    <source>
    </source>
</evidence>
<evidence type="ECO:0000303" key="4">
    <source>
    </source>
</evidence>
<evidence type="ECO:0000305" key="5"/>
<evidence type="ECO:0000305" key="6">
    <source ref="5"/>
</evidence>
<evidence type="ECO:0000312" key="7">
    <source>
        <dbReference type="EMBL" id="ABQ42966.1"/>
    </source>
</evidence>
<evidence type="ECO:0000312" key="8">
    <source>
        <dbReference type="EMBL" id="CAA57242.1"/>
    </source>
</evidence>
<evidence type="ECO:0000312" key="9">
    <source>
        <dbReference type="EMBL" id="CAG44434.1"/>
    </source>
</evidence>
<evidence type="ECO:0000312" key="10">
    <source>
        <dbReference type="EMBL" id="CAG44437.1"/>
    </source>
</evidence>
<evidence type="ECO:0000312" key="11">
    <source>
        <dbReference type="EMBL" id="CAG44440.1"/>
    </source>
</evidence>
<evidence type="ECO:0007744" key="12">
    <source>
        <dbReference type="PDB" id="7BML"/>
    </source>
</evidence>
<evidence type="ECO:0007829" key="13">
    <source>
        <dbReference type="PDB" id="7BML"/>
    </source>
</evidence>
<evidence type="ECO:0007829" key="14">
    <source>
        <dbReference type="PDB" id="7UJ2"/>
    </source>
</evidence>
<gene>
    <name evidence="4" type="primary">ospC</name>
</gene>